<comment type="similarity">
    <text evidence="1">Belongs to the SlyX family.</text>
</comment>
<reference key="1">
    <citation type="journal article" date="2009" name="J. Bacteriol.">
        <title>Genomic sequencing reveals regulatory mutations and recombinational events in the widely used MC4100 lineage of Escherichia coli K-12.</title>
        <authorList>
            <person name="Ferenci T."/>
            <person name="Zhou Z."/>
            <person name="Betteridge T."/>
            <person name="Ren Y."/>
            <person name="Liu Y."/>
            <person name="Feng L."/>
            <person name="Reeves P.R."/>
            <person name="Wang L."/>
        </authorList>
    </citation>
    <scope>NUCLEOTIDE SEQUENCE [LARGE SCALE GENOMIC DNA]</scope>
    <source>
        <strain>K12 / MC4100 / BW2952</strain>
    </source>
</reference>
<gene>
    <name evidence="1" type="primary">slyX</name>
    <name type="ordered locus">BWG_3039</name>
</gene>
<feature type="chain" id="PRO_1000212681" description="Protein SlyX">
    <location>
        <begin position="1"/>
        <end position="72"/>
    </location>
</feature>
<feature type="region of interest" description="Disordered" evidence="2">
    <location>
        <begin position="52"/>
        <end position="72"/>
    </location>
</feature>
<feature type="compositionally biased region" description="Polar residues" evidence="2">
    <location>
        <begin position="55"/>
        <end position="65"/>
    </location>
</feature>
<accession>C4ZUK3</accession>
<organism>
    <name type="scientific">Escherichia coli (strain K12 / MC4100 / BW2952)</name>
    <dbReference type="NCBI Taxonomy" id="595496"/>
    <lineage>
        <taxon>Bacteria</taxon>
        <taxon>Pseudomonadati</taxon>
        <taxon>Pseudomonadota</taxon>
        <taxon>Gammaproteobacteria</taxon>
        <taxon>Enterobacterales</taxon>
        <taxon>Enterobacteriaceae</taxon>
        <taxon>Escherichia</taxon>
    </lineage>
</organism>
<evidence type="ECO:0000255" key="1">
    <source>
        <dbReference type="HAMAP-Rule" id="MF_00715"/>
    </source>
</evidence>
<evidence type="ECO:0000256" key="2">
    <source>
        <dbReference type="SAM" id="MobiDB-lite"/>
    </source>
</evidence>
<proteinExistence type="inferred from homology"/>
<dbReference type="EMBL" id="CP001396">
    <property type="protein sequence ID" value="ACR62537.1"/>
    <property type="molecule type" value="Genomic_DNA"/>
</dbReference>
<dbReference type="RefSeq" id="WP_001153615.1">
    <property type="nucleotide sequence ID" value="NC_012759.1"/>
</dbReference>
<dbReference type="SMR" id="C4ZUK3"/>
<dbReference type="KEGG" id="ebw:BWG_3039"/>
<dbReference type="HOGENOM" id="CLU_180796_4_2_6"/>
<dbReference type="Gene3D" id="1.20.5.300">
    <property type="match status" value="1"/>
</dbReference>
<dbReference type="HAMAP" id="MF_00715">
    <property type="entry name" value="SlyX"/>
    <property type="match status" value="1"/>
</dbReference>
<dbReference type="InterPro" id="IPR007236">
    <property type="entry name" value="SlyX"/>
</dbReference>
<dbReference type="NCBIfam" id="NF002750">
    <property type="entry name" value="PRK02793.1"/>
    <property type="match status" value="1"/>
</dbReference>
<dbReference type="PANTHER" id="PTHR36508">
    <property type="entry name" value="PROTEIN SLYX"/>
    <property type="match status" value="1"/>
</dbReference>
<dbReference type="PANTHER" id="PTHR36508:SF1">
    <property type="entry name" value="PROTEIN SLYX"/>
    <property type="match status" value="1"/>
</dbReference>
<dbReference type="Pfam" id="PF04102">
    <property type="entry name" value="SlyX"/>
    <property type="match status" value="1"/>
</dbReference>
<name>SLYX_ECOBW</name>
<protein>
    <recommendedName>
        <fullName evidence="1">Protein SlyX</fullName>
    </recommendedName>
</protein>
<sequence length="72" mass="8214">MQDLSLEARLAELESRLAFQEITIEELNVTVTAHEMEMAKLRDHLRLLTEKLKASQPSNIASQAEETPPPHY</sequence>